<accession>A6TG44</accession>
<gene>
    <name evidence="1" type="primary">rsmG</name>
    <name type="ordered locus">KPN78578_41040</name>
    <name type="ORF">KPN_04145</name>
</gene>
<reference key="1">
    <citation type="submission" date="2006-09" db="EMBL/GenBank/DDBJ databases">
        <authorList>
            <consortium name="The Klebsiella pneumonia Genome Sequencing Project"/>
            <person name="McClelland M."/>
            <person name="Sanderson E.K."/>
            <person name="Spieth J."/>
            <person name="Clifton W.S."/>
            <person name="Latreille P."/>
            <person name="Sabo A."/>
            <person name="Pepin K."/>
            <person name="Bhonagiri V."/>
            <person name="Porwollik S."/>
            <person name="Ali J."/>
            <person name="Wilson R.K."/>
        </authorList>
    </citation>
    <scope>NUCLEOTIDE SEQUENCE [LARGE SCALE GENOMIC DNA]</scope>
    <source>
        <strain>ATCC 700721 / MGH 78578</strain>
    </source>
</reference>
<dbReference type="EC" id="2.1.1.170" evidence="1"/>
<dbReference type="EMBL" id="CP000647">
    <property type="protein sequence ID" value="ABR79528.1"/>
    <property type="molecule type" value="Genomic_DNA"/>
</dbReference>
<dbReference type="RefSeq" id="WP_004151554.1">
    <property type="nucleotide sequence ID" value="NC_009648.1"/>
</dbReference>
<dbReference type="SMR" id="A6TG44"/>
<dbReference type="STRING" id="272620.KPN_04145"/>
<dbReference type="PaxDb" id="272620-KPN_04145"/>
<dbReference type="EnsemblBacteria" id="ABR79528">
    <property type="protein sequence ID" value="ABR79528"/>
    <property type="gene ID" value="KPN_04145"/>
</dbReference>
<dbReference type="KEGG" id="kpn:KPN_04145"/>
<dbReference type="HOGENOM" id="CLU_065341_2_2_6"/>
<dbReference type="Proteomes" id="UP000000265">
    <property type="component" value="Chromosome"/>
</dbReference>
<dbReference type="GO" id="GO:0005829">
    <property type="term" value="C:cytosol"/>
    <property type="evidence" value="ECO:0007669"/>
    <property type="project" value="TreeGrafter"/>
</dbReference>
<dbReference type="GO" id="GO:0070043">
    <property type="term" value="F:rRNA (guanine-N7-)-methyltransferase activity"/>
    <property type="evidence" value="ECO:0007669"/>
    <property type="project" value="UniProtKB-UniRule"/>
</dbReference>
<dbReference type="CDD" id="cd02440">
    <property type="entry name" value="AdoMet_MTases"/>
    <property type="match status" value="1"/>
</dbReference>
<dbReference type="FunFam" id="3.40.50.150:FF:000032">
    <property type="entry name" value="Ribosomal RNA small subunit methyltransferase G"/>
    <property type="match status" value="1"/>
</dbReference>
<dbReference type="Gene3D" id="3.40.50.150">
    <property type="entry name" value="Vaccinia Virus protein VP39"/>
    <property type="match status" value="1"/>
</dbReference>
<dbReference type="HAMAP" id="MF_00074">
    <property type="entry name" value="16SrRNA_methyltr_G"/>
    <property type="match status" value="1"/>
</dbReference>
<dbReference type="InterPro" id="IPR003682">
    <property type="entry name" value="rRNA_ssu_MeTfrase_G"/>
</dbReference>
<dbReference type="InterPro" id="IPR029063">
    <property type="entry name" value="SAM-dependent_MTases_sf"/>
</dbReference>
<dbReference type="NCBIfam" id="TIGR00138">
    <property type="entry name" value="rsmG_gidB"/>
    <property type="match status" value="1"/>
</dbReference>
<dbReference type="PANTHER" id="PTHR31760">
    <property type="entry name" value="S-ADENOSYL-L-METHIONINE-DEPENDENT METHYLTRANSFERASES SUPERFAMILY PROTEIN"/>
    <property type="match status" value="1"/>
</dbReference>
<dbReference type="PANTHER" id="PTHR31760:SF0">
    <property type="entry name" value="S-ADENOSYL-L-METHIONINE-DEPENDENT METHYLTRANSFERASES SUPERFAMILY PROTEIN"/>
    <property type="match status" value="1"/>
</dbReference>
<dbReference type="Pfam" id="PF02527">
    <property type="entry name" value="GidB"/>
    <property type="match status" value="1"/>
</dbReference>
<dbReference type="PIRSF" id="PIRSF003078">
    <property type="entry name" value="GidB"/>
    <property type="match status" value="1"/>
</dbReference>
<dbReference type="SUPFAM" id="SSF53335">
    <property type="entry name" value="S-adenosyl-L-methionine-dependent methyltransferases"/>
    <property type="match status" value="1"/>
</dbReference>
<protein>
    <recommendedName>
        <fullName evidence="1">Ribosomal RNA small subunit methyltransferase G</fullName>
        <ecNumber evidence="1">2.1.1.170</ecNumber>
    </recommendedName>
    <alternativeName>
        <fullName evidence="1">16S rRNA 7-methylguanosine methyltransferase</fullName>
        <shortName evidence="1">16S rRNA m7G methyltransferase</shortName>
    </alternativeName>
</protein>
<feature type="chain" id="PRO_1000010155" description="Ribosomal RNA small subunit methyltransferase G">
    <location>
        <begin position="1"/>
        <end position="207"/>
    </location>
</feature>
<feature type="binding site" evidence="1">
    <location>
        <position position="73"/>
    </location>
    <ligand>
        <name>S-adenosyl-L-methionine</name>
        <dbReference type="ChEBI" id="CHEBI:59789"/>
    </ligand>
</feature>
<feature type="binding site" evidence="1">
    <location>
        <position position="78"/>
    </location>
    <ligand>
        <name>S-adenosyl-L-methionine</name>
        <dbReference type="ChEBI" id="CHEBI:59789"/>
    </ligand>
</feature>
<feature type="binding site" evidence="1">
    <location>
        <begin position="124"/>
        <end position="125"/>
    </location>
    <ligand>
        <name>S-adenosyl-L-methionine</name>
        <dbReference type="ChEBI" id="CHEBI:59789"/>
    </ligand>
</feature>
<feature type="binding site" evidence="1">
    <location>
        <position position="139"/>
    </location>
    <ligand>
        <name>S-adenosyl-L-methionine</name>
        <dbReference type="ChEBI" id="CHEBI:59789"/>
    </ligand>
</feature>
<proteinExistence type="inferred from homology"/>
<comment type="function">
    <text evidence="1">Specifically methylates the N7 position of guanine in position 527 of 16S rRNA.</text>
</comment>
<comment type="catalytic activity">
    <reaction evidence="1">
        <text>guanosine(527) in 16S rRNA + S-adenosyl-L-methionine = N(7)-methylguanosine(527) in 16S rRNA + S-adenosyl-L-homocysteine</text>
        <dbReference type="Rhea" id="RHEA:42732"/>
        <dbReference type="Rhea" id="RHEA-COMP:10209"/>
        <dbReference type="Rhea" id="RHEA-COMP:10210"/>
        <dbReference type="ChEBI" id="CHEBI:57856"/>
        <dbReference type="ChEBI" id="CHEBI:59789"/>
        <dbReference type="ChEBI" id="CHEBI:74269"/>
        <dbReference type="ChEBI" id="CHEBI:74480"/>
        <dbReference type="EC" id="2.1.1.170"/>
    </reaction>
</comment>
<comment type="subcellular location">
    <subcellularLocation>
        <location evidence="1">Cytoplasm</location>
    </subcellularLocation>
</comment>
<comment type="similarity">
    <text evidence="1">Belongs to the methyltransferase superfamily. RNA methyltransferase RsmG family.</text>
</comment>
<keyword id="KW-0963">Cytoplasm</keyword>
<keyword id="KW-0489">Methyltransferase</keyword>
<keyword id="KW-0698">rRNA processing</keyword>
<keyword id="KW-0949">S-adenosyl-L-methionine</keyword>
<keyword id="KW-0808">Transferase</keyword>
<sequence>MLNKLSRLLDEAGISLTDHQKNQLVAYVGLLDKWNKAYNLTSVRDPNEMLVRHILDSIIVAPYLQGSRFIDVGTGPGLPGIPLAIVCPESHFTLLDSLGKRVRFLRQVQHELKLDNVTPVQSRVEAFPAEPPFDGVISRAFASLNDMVSWCHHLPAANGHFYALKGLAQKEEMESLPEGYDIVEVIELHVPRLEGERHLVVIKPKSS</sequence>
<evidence type="ECO:0000255" key="1">
    <source>
        <dbReference type="HAMAP-Rule" id="MF_00074"/>
    </source>
</evidence>
<organism>
    <name type="scientific">Klebsiella pneumoniae subsp. pneumoniae (strain ATCC 700721 / MGH 78578)</name>
    <dbReference type="NCBI Taxonomy" id="272620"/>
    <lineage>
        <taxon>Bacteria</taxon>
        <taxon>Pseudomonadati</taxon>
        <taxon>Pseudomonadota</taxon>
        <taxon>Gammaproteobacteria</taxon>
        <taxon>Enterobacterales</taxon>
        <taxon>Enterobacteriaceae</taxon>
        <taxon>Klebsiella/Raoultella group</taxon>
        <taxon>Klebsiella</taxon>
        <taxon>Klebsiella pneumoniae complex</taxon>
    </lineage>
</organism>
<name>RSMG_KLEP7</name>